<gene>
    <name type="primary">apcA</name>
</gene>
<protein>
    <recommendedName>
        <fullName>Allophycocyanin alpha chain</fullName>
    </recommendedName>
</protein>
<comment type="function">
    <text>Light-harvesting photosynthetic tetrapyrrole chromophore-protein from the phycobiliprotein complex.</text>
</comment>
<comment type="subunit">
    <text evidence="2">Heterododecamer of 6 alpha and 6 beta chains. The basic functional unit of phycobiliproteins is a ring-shaped hexamer formed from two back-to-back trimers contacting via the alpha chain subunits. The trimers are composed of alpha/beta subunit heterodimers arranged around a three-fold axis of symmetry. The phycoerythrins also contain a gamma subunit which is located in the center of the hexamer.</text>
</comment>
<comment type="subcellular location">
    <subcellularLocation>
        <location>Plastid</location>
        <location>Chloroplast thylakoid membrane</location>
        <topology>Peripheral membrane protein</topology>
        <orientation>Stromal side</orientation>
    </subcellularLocation>
    <text>Forms the core of the phycobilisome.</text>
</comment>
<comment type="PTM">
    <text>Contains one covalently linked phycocyanobilin chromophore.</text>
</comment>
<comment type="miscellaneous">
    <text>The light-harvesting antenna system in red algae and cyanobacteria is formed of phycobilisomes. These are composed of the phycobiliproteins phycoerythrin (CPE), phycocyanin (CPC) and allophycocyanin (APC). Cyanobacteria also contain phycoerythrocyanin (PCC). The phycobiliproteins all share the same subunit composition and organization with variations in the covalently bound open-chain tetrapyrrole chromophores. The phycobiliprotein complexes are arranged sequentially in antenna complexes linked by linker proteins with CPE at the periphery, CPC in the middle and APC at the core feeding to the photosynthetic reaction center. Allophycocyanin has a maximum absorption at approximately 650 nanometers.</text>
</comment>
<comment type="similarity">
    <text evidence="3">Belongs to the phycobiliprotein family.</text>
</comment>
<comment type="caution">
    <text evidence="3">Neither a protein sequence nor a nucleotide sequence had been determined for this protein when the crystallographic structure was reported. The sequence of a model fit to electron density plots at 2.2 Angstroms resolution was used. When a nucleotide sequence became available, it replaced the model sequence. There are 14 differences between the model and the nucleotide sequences.</text>
</comment>
<name>PHAA_PYRYE</name>
<proteinExistence type="evidence at protein level"/>
<sequence>MSIVTKSIVNADAEARYLSPGELDRIKSFVLSGQRRLRIAQILTDNRERIVKQGGQQLFQKRPDVVSPGGNAYGEEMTATCLRDLDYYLRLVTYGIVAGDVTPIEEIGLVGVKEMYNSLGTPISGVAEGVKCMKSVACSLLAGEDSAEAGFYFDYTLGAMQ</sequence>
<accession>P59856</accession>
<accession>Q1XDM5</accession>
<reference key="1">
    <citation type="submission" date="2003-11" db="EMBL/GenBank/DDBJ databases">
        <title>Whole genome sequence of Porphyra yezoensis chloroplast.</title>
        <authorList>
            <person name="Kunimoto M."/>
            <person name="Morishima K."/>
            <person name="Yoshikawa M."/>
            <person name="Fukuda S."/>
            <person name="Kobayashi T."/>
            <person name="Kobayashi M."/>
            <person name="Okazaki T."/>
            <person name="Ohara I."/>
            <person name="Nakayama I."/>
        </authorList>
    </citation>
    <scope>NUCLEOTIDE SEQUENCE [LARGE SCALE GENOMIC DNA]</scope>
    <source>
        <strain>U-51</strain>
    </source>
</reference>
<reference key="2">
    <citation type="journal article" date="1998" name="Acta Crystallogr. D">
        <title>Crystallization and preliminary X-ray studies of allophycocyanin from red alga Porphyra yezoensis.</title>
        <authorList>
            <person name="Liu J.-Y."/>
            <person name="Zhang J.-P."/>
            <person name="Wan Z.-L."/>
            <person name="Liang D.-C."/>
            <person name="Zhang J.-P."/>
            <person name="Wu H.-J."/>
        </authorList>
    </citation>
    <scope>CRYSTALLIZATION</scope>
</reference>
<reference key="3">
    <citation type="journal article" date="1999" name="J. Biol. Chem.">
        <title>Crystal structure of allophycocyanin from red algae Porphyra yezoensis at 2.2-A resolution.</title>
        <authorList>
            <person name="Liu J.-Y."/>
            <person name="Jiang T."/>
            <person name="Zhang J.-P."/>
            <person name="Liang D.-C."/>
        </authorList>
    </citation>
    <scope>X-RAY CRYSTALLOGRAPHY (2.2 ANGSTROMS) IN COMPLEX WITH APCB AND PHYCOCYANOBILIN</scope>
    <scope>SUBUNIT</scope>
</reference>
<geneLocation type="chloroplast"/>
<dbReference type="EMBL" id="AP006715">
    <property type="protein sequence ID" value="BAE92386.1"/>
    <property type="molecule type" value="Genomic_DNA"/>
</dbReference>
<dbReference type="RefSeq" id="YP_536943.1">
    <property type="nucleotide sequence ID" value="NC_007932.1"/>
</dbReference>
<dbReference type="PDB" id="1KN1">
    <property type="method" value="X-ray"/>
    <property type="resolution" value="2.20 A"/>
    <property type="chains" value="A=2-161"/>
</dbReference>
<dbReference type="PDBsum" id="1KN1"/>
<dbReference type="SMR" id="P59856"/>
<dbReference type="GeneID" id="3978963"/>
<dbReference type="EvolutionaryTrace" id="P59856"/>
<dbReference type="GO" id="GO:0009535">
    <property type="term" value="C:chloroplast thylakoid membrane"/>
    <property type="evidence" value="ECO:0007669"/>
    <property type="project" value="UniProtKB-SubCell"/>
</dbReference>
<dbReference type="GO" id="GO:0030089">
    <property type="term" value="C:phycobilisome"/>
    <property type="evidence" value="ECO:0007669"/>
    <property type="project" value="UniProtKB-KW"/>
</dbReference>
<dbReference type="GO" id="GO:0015979">
    <property type="term" value="P:photosynthesis"/>
    <property type="evidence" value="ECO:0007669"/>
    <property type="project" value="UniProtKB-KW"/>
</dbReference>
<dbReference type="CDD" id="cd12125">
    <property type="entry name" value="APC_alpha"/>
    <property type="match status" value="1"/>
</dbReference>
<dbReference type="Gene3D" id="1.10.490.20">
    <property type="entry name" value="Phycocyanins"/>
    <property type="match status" value="1"/>
</dbReference>
<dbReference type="InterPro" id="IPR009050">
    <property type="entry name" value="Globin-like_sf"/>
</dbReference>
<dbReference type="InterPro" id="IPR012128">
    <property type="entry name" value="Phycobilisome_asu/bsu"/>
</dbReference>
<dbReference type="InterPro" id="IPR038719">
    <property type="entry name" value="Phycobilisome_asu/bsu_sf"/>
</dbReference>
<dbReference type="PANTHER" id="PTHR34011:SF2">
    <property type="entry name" value="ALLOPHYCOCYANIN ALPHA CHAIN"/>
    <property type="match status" value="1"/>
</dbReference>
<dbReference type="PANTHER" id="PTHR34011">
    <property type="entry name" value="PHYCOBILISOME 32.1 KDA LINKER POLYPEPTIDE, PHYCOCYANIN-ASSOCIATED, ROD 2-RELATED"/>
    <property type="match status" value="1"/>
</dbReference>
<dbReference type="Pfam" id="PF00502">
    <property type="entry name" value="Phycobilisome"/>
    <property type="match status" value="1"/>
</dbReference>
<dbReference type="PIRSF" id="PIRSF000081">
    <property type="entry name" value="Phycocyanin"/>
    <property type="match status" value="1"/>
</dbReference>
<dbReference type="SUPFAM" id="SSF46458">
    <property type="entry name" value="Globin-like"/>
    <property type="match status" value="1"/>
</dbReference>
<evidence type="ECO:0000250" key="1"/>
<evidence type="ECO:0000269" key="2">
    <source>
    </source>
</evidence>
<evidence type="ECO:0000305" key="3"/>
<evidence type="ECO:0007829" key="4">
    <source>
        <dbReference type="PDB" id="1KN1"/>
    </source>
</evidence>
<feature type="initiator methionine" description="Removed">
    <location>
        <position position="1"/>
    </location>
</feature>
<feature type="chain" id="PRO_0000199085" description="Allophycocyanin alpha chain">
    <location>
        <begin position="2"/>
        <end position="161"/>
    </location>
</feature>
<feature type="binding site" description="covalent" evidence="2">
    <location>
        <position position="81"/>
    </location>
    <ligand>
        <name>(2R,3E)-phycocyanobilin</name>
        <dbReference type="ChEBI" id="CHEBI:85275"/>
    </ligand>
</feature>
<feature type="binding site" evidence="2">
    <location>
        <position position="83"/>
    </location>
    <ligand>
        <name>(2R,3E)-phycocyanobilin</name>
        <dbReference type="ChEBI" id="CHEBI:85275"/>
    </ligand>
</feature>
<feature type="binding site" evidence="2">
    <location>
        <position position="84"/>
    </location>
    <ligand>
        <name>(2R,3E)-phycocyanobilin</name>
        <dbReference type="ChEBI" id="CHEBI:85275"/>
    </ligand>
</feature>
<feature type="modified residue" description="N4-methylasparagine" evidence="1">
    <location>
        <position position="71"/>
    </location>
</feature>
<feature type="helix" evidence="4">
    <location>
        <begin position="3"/>
        <end position="13"/>
    </location>
</feature>
<feature type="helix" evidence="4">
    <location>
        <begin position="20"/>
        <end position="30"/>
    </location>
</feature>
<feature type="helix" evidence="4">
    <location>
        <begin position="33"/>
        <end position="45"/>
    </location>
</feature>
<feature type="helix" evidence="4">
    <location>
        <begin position="47"/>
        <end position="58"/>
    </location>
</feature>
<feature type="turn" evidence="4">
    <location>
        <begin position="59"/>
        <end position="61"/>
    </location>
</feature>
<feature type="strand" evidence="4">
    <location>
        <begin position="66"/>
        <end position="69"/>
    </location>
</feature>
<feature type="helix" evidence="4">
    <location>
        <begin position="77"/>
        <end position="98"/>
    </location>
</feature>
<feature type="helix" evidence="4">
    <location>
        <begin position="102"/>
        <end position="108"/>
    </location>
</feature>
<feature type="turn" evidence="4">
    <location>
        <begin position="109"/>
        <end position="111"/>
    </location>
</feature>
<feature type="helix" evidence="4">
    <location>
        <begin position="112"/>
        <end position="119"/>
    </location>
</feature>
<feature type="helix" evidence="4">
    <location>
        <begin position="123"/>
        <end position="139"/>
    </location>
</feature>
<feature type="helix" evidence="4">
    <location>
        <begin position="143"/>
        <end position="158"/>
    </location>
</feature>
<keyword id="KW-0002">3D-structure</keyword>
<keyword id="KW-0042">Antenna complex</keyword>
<keyword id="KW-0089">Bile pigment</keyword>
<keyword id="KW-0150">Chloroplast</keyword>
<keyword id="KW-0157">Chromophore</keyword>
<keyword id="KW-0249">Electron transport</keyword>
<keyword id="KW-0472">Membrane</keyword>
<keyword id="KW-0488">Methylation</keyword>
<keyword id="KW-0602">Photosynthesis</keyword>
<keyword id="KW-0605">Phycobilisome</keyword>
<keyword id="KW-0934">Plastid</keyword>
<keyword id="KW-0793">Thylakoid</keyword>
<keyword id="KW-0813">Transport</keyword>
<organism>
    <name type="scientific">Pyropia yezoensis</name>
    <name type="common">Susabi-nori</name>
    <name type="synonym">Porphyra yezoensis</name>
    <dbReference type="NCBI Taxonomy" id="2788"/>
    <lineage>
        <taxon>Eukaryota</taxon>
        <taxon>Rhodophyta</taxon>
        <taxon>Bangiophyceae</taxon>
        <taxon>Bangiales</taxon>
        <taxon>Bangiaceae</taxon>
        <taxon>Pyropia</taxon>
    </lineage>
</organism>